<name>RS8_PECAS</name>
<dbReference type="EMBL" id="BX950851">
    <property type="protein sequence ID" value="CAG76914.1"/>
    <property type="molecule type" value="Genomic_DNA"/>
</dbReference>
<dbReference type="RefSeq" id="WP_011095503.1">
    <property type="nucleotide sequence ID" value="NC_004547.2"/>
</dbReference>
<dbReference type="SMR" id="Q6CZY4"/>
<dbReference type="STRING" id="218491.ECA4017"/>
<dbReference type="GeneID" id="57210681"/>
<dbReference type="KEGG" id="eca:ECA4017"/>
<dbReference type="PATRIC" id="fig|218491.5.peg.4083"/>
<dbReference type="eggNOG" id="COG0096">
    <property type="taxonomic scope" value="Bacteria"/>
</dbReference>
<dbReference type="HOGENOM" id="CLU_098428_0_0_6"/>
<dbReference type="OrthoDB" id="9802617at2"/>
<dbReference type="Proteomes" id="UP000007966">
    <property type="component" value="Chromosome"/>
</dbReference>
<dbReference type="GO" id="GO:1990904">
    <property type="term" value="C:ribonucleoprotein complex"/>
    <property type="evidence" value="ECO:0007669"/>
    <property type="project" value="UniProtKB-KW"/>
</dbReference>
<dbReference type="GO" id="GO:0005840">
    <property type="term" value="C:ribosome"/>
    <property type="evidence" value="ECO:0007669"/>
    <property type="project" value="UniProtKB-KW"/>
</dbReference>
<dbReference type="GO" id="GO:0019843">
    <property type="term" value="F:rRNA binding"/>
    <property type="evidence" value="ECO:0007669"/>
    <property type="project" value="UniProtKB-UniRule"/>
</dbReference>
<dbReference type="GO" id="GO:0003735">
    <property type="term" value="F:structural constituent of ribosome"/>
    <property type="evidence" value="ECO:0007669"/>
    <property type="project" value="InterPro"/>
</dbReference>
<dbReference type="GO" id="GO:0006412">
    <property type="term" value="P:translation"/>
    <property type="evidence" value="ECO:0007669"/>
    <property type="project" value="UniProtKB-UniRule"/>
</dbReference>
<dbReference type="FunFam" id="3.30.1370.30:FF:000003">
    <property type="entry name" value="30S ribosomal protein S8"/>
    <property type="match status" value="1"/>
</dbReference>
<dbReference type="FunFam" id="3.30.1490.10:FF:000001">
    <property type="entry name" value="30S ribosomal protein S8"/>
    <property type="match status" value="1"/>
</dbReference>
<dbReference type="Gene3D" id="3.30.1370.30">
    <property type="match status" value="1"/>
</dbReference>
<dbReference type="Gene3D" id="3.30.1490.10">
    <property type="match status" value="1"/>
</dbReference>
<dbReference type="HAMAP" id="MF_01302_B">
    <property type="entry name" value="Ribosomal_uS8_B"/>
    <property type="match status" value="1"/>
</dbReference>
<dbReference type="InterPro" id="IPR000630">
    <property type="entry name" value="Ribosomal_uS8"/>
</dbReference>
<dbReference type="InterPro" id="IPR047863">
    <property type="entry name" value="Ribosomal_uS8_CS"/>
</dbReference>
<dbReference type="InterPro" id="IPR035987">
    <property type="entry name" value="Ribosomal_uS8_sf"/>
</dbReference>
<dbReference type="NCBIfam" id="NF001109">
    <property type="entry name" value="PRK00136.1"/>
    <property type="match status" value="1"/>
</dbReference>
<dbReference type="PANTHER" id="PTHR11758">
    <property type="entry name" value="40S RIBOSOMAL PROTEIN S15A"/>
    <property type="match status" value="1"/>
</dbReference>
<dbReference type="Pfam" id="PF00410">
    <property type="entry name" value="Ribosomal_S8"/>
    <property type="match status" value="1"/>
</dbReference>
<dbReference type="SUPFAM" id="SSF56047">
    <property type="entry name" value="Ribosomal protein S8"/>
    <property type="match status" value="1"/>
</dbReference>
<dbReference type="PROSITE" id="PS00053">
    <property type="entry name" value="RIBOSOMAL_S8"/>
    <property type="match status" value="1"/>
</dbReference>
<organism>
    <name type="scientific">Pectobacterium atrosepticum (strain SCRI 1043 / ATCC BAA-672)</name>
    <name type="common">Erwinia carotovora subsp. atroseptica</name>
    <dbReference type="NCBI Taxonomy" id="218491"/>
    <lineage>
        <taxon>Bacteria</taxon>
        <taxon>Pseudomonadati</taxon>
        <taxon>Pseudomonadota</taxon>
        <taxon>Gammaproteobacteria</taxon>
        <taxon>Enterobacterales</taxon>
        <taxon>Pectobacteriaceae</taxon>
        <taxon>Pectobacterium</taxon>
    </lineage>
</organism>
<accession>Q6CZY4</accession>
<reference key="1">
    <citation type="journal article" date="2004" name="Proc. Natl. Acad. Sci. U.S.A.">
        <title>Genome sequence of the enterobacterial phytopathogen Erwinia carotovora subsp. atroseptica and characterization of virulence factors.</title>
        <authorList>
            <person name="Bell K.S."/>
            <person name="Sebaihia M."/>
            <person name="Pritchard L."/>
            <person name="Holden M.T.G."/>
            <person name="Hyman L.J."/>
            <person name="Holeva M.C."/>
            <person name="Thomson N.R."/>
            <person name="Bentley S.D."/>
            <person name="Churcher L.J.C."/>
            <person name="Mungall K."/>
            <person name="Atkin R."/>
            <person name="Bason N."/>
            <person name="Brooks K."/>
            <person name="Chillingworth T."/>
            <person name="Clark K."/>
            <person name="Doggett J."/>
            <person name="Fraser A."/>
            <person name="Hance Z."/>
            <person name="Hauser H."/>
            <person name="Jagels K."/>
            <person name="Moule S."/>
            <person name="Norbertczak H."/>
            <person name="Ormond D."/>
            <person name="Price C."/>
            <person name="Quail M.A."/>
            <person name="Sanders M."/>
            <person name="Walker D."/>
            <person name="Whitehead S."/>
            <person name="Salmond G.P.C."/>
            <person name="Birch P.R.J."/>
            <person name="Parkhill J."/>
            <person name="Toth I.K."/>
        </authorList>
    </citation>
    <scope>NUCLEOTIDE SEQUENCE [LARGE SCALE GENOMIC DNA]</scope>
    <source>
        <strain>SCRI 1043 / ATCC BAA-672</strain>
    </source>
</reference>
<gene>
    <name evidence="2" type="primary">rpsH</name>
    <name type="ordered locus">ECA4017</name>
</gene>
<feature type="initiator methionine" description="Removed" evidence="1">
    <location>
        <position position="1"/>
    </location>
</feature>
<feature type="chain" id="PRO_0000126409" description="Small ribosomal subunit protein uS8">
    <location>
        <begin position="2"/>
        <end position="130"/>
    </location>
</feature>
<protein>
    <recommendedName>
        <fullName evidence="2">Small ribosomal subunit protein uS8</fullName>
    </recommendedName>
    <alternativeName>
        <fullName evidence="3">30S ribosomal protein S8</fullName>
    </alternativeName>
</protein>
<comment type="function">
    <text evidence="2">One of the primary rRNA binding proteins, it binds directly to 16S rRNA central domain where it helps coordinate assembly of the platform of the 30S subunit.</text>
</comment>
<comment type="subunit">
    <text evidence="2">Part of the 30S ribosomal subunit. Contacts proteins S5 and S12.</text>
</comment>
<comment type="similarity">
    <text evidence="2">Belongs to the universal ribosomal protein uS8 family.</text>
</comment>
<evidence type="ECO:0000250" key="1"/>
<evidence type="ECO:0000255" key="2">
    <source>
        <dbReference type="HAMAP-Rule" id="MF_01302"/>
    </source>
</evidence>
<evidence type="ECO:0000305" key="3"/>
<sequence>MSMQDPIADMLTRIRNGQAANKVAVTMPSSKLKVAIANVLKEEGYIEDFKIEGDTKPVLELELKYFQGKAVVESIQRISRPGLRIYKRKDELPKVMAGLGIAVISTSKGVMTDRAARQAGLGGEIICYVA</sequence>
<proteinExistence type="inferred from homology"/>
<keyword id="KW-1185">Reference proteome</keyword>
<keyword id="KW-0687">Ribonucleoprotein</keyword>
<keyword id="KW-0689">Ribosomal protein</keyword>
<keyword id="KW-0694">RNA-binding</keyword>
<keyword id="KW-0699">rRNA-binding</keyword>